<reference key="1">
    <citation type="submission" date="2007-10" db="EMBL/GenBank/DDBJ databases">
        <title>Brucella canis ATCC 23365 whole genome shotgun sequencing project.</title>
        <authorList>
            <person name="Setubal J.C."/>
            <person name="Bowns C."/>
            <person name="Boyle S."/>
            <person name="Crasta O.R."/>
            <person name="Czar M.J."/>
            <person name="Dharmanolla C."/>
            <person name="Gillespie J.J."/>
            <person name="Kenyon R.W."/>
            <person name="Lu J."/>
            <person name="Mane S."/>
            <person name="Mohapatra S."/>
            <person name="Nagrani S."/>
            <person name="Purkayastha A."/>
            <person name="Rajasimha H.K."/>
            <person name="Shallom J.M."/>
            <person name="Shallom S."/>
            <person name="Shukla M."/>
            <person name="Snyder E.E."/>
            <person name="Sobral B.W."/>
            <person name="Wattam A.R."/>
            <person name="Will R."/>
            <person name="Williams K."/>
            <person name="Yoo H."/>
            <person name="Bruce D."/>
            <person name="Detter C."/>
            <person name="Munk C."/>
            <person name="Brettin T.S."/>
        </authorList>
    </citation>
    <scope>NUCLEOTIDE SEQUENCE [LARGE SCALE GENOMIC DNA]</scope>
    <source>
        <strain>ATCC 23365 / NCTC 10854 / RM-666</strain>
    </source>
</reference>
<gene>
    <name evidence="1" type="primary">lgt</name>
    <name type="ordered locus">BCAN_A1565</name>
</gene>
<name>LGT_BRUC2</name>
<sequence>MIETLLPASALAFPAIDPVIFRIGPLAVHWYGLGYVVGILFAWWYGKKLLRSHRLWANNQPPMAPEALDDFVIWAALGVVLGGRIGYVLFYNFSYYISNPLAIPALWDGGMSFHGGILGTTLAMILFARSRGILVWSMFDTIAAGVPIGLGVVRVANFINSELWGRVSDVPWAVYFPNGGPLPRHPSQLYEAFLEGLVLFFVLFVLVWGARKLKQPGFVAGAFVTGYGLSRIAVEFFREPDAQIGYLFGGWLTMGMVLSVPMVLLGLWAMWRANRAAARNA</sequence>
<protein>
    <recommendedName>
        <fullName evidence="1">Phosphatidylglycerol--prolipoprotein diacylglyceryl transferase</fullName>
        <ecNumber evidence="1">2.5.1.145</ecNumber>
    </recommendedName>
</protein>
<keyword id="KW-0997">Cell inner membrane</keyword>
<keyword id="KW-1003">Cell membrane</keyword>
<keyword id="KW-0472">Membrane</keyword>
<keyword id="KW-1185">Reference proteome</keyword>
<keyword id="KW-0808">Transferase</keyword>
<keyword id="KW-0812">Transmembrane</keyword>
<keyword id="KW-1133">Transmembrane helix</keyword>
<evidence type="ECO:0000255" key="1">
    <source>
        <dbReference type="HAMAP-Rule" id="MF_01147"/>
    </source>
</evidence>
<proteinExistence type="inferred from homology"/>
<accession>A9M6J4</accession>
<feature type="chain" id="PRO_1000085068" description="Phosphatidylglycerol--prolipoprotein diacylglyceryl transferase">
    <location>
        <begin position="1"/>
        <end position="281"/>
    </location>
</feature>
<feature type="transmembrane region" description="Helical" evidence="1">
    <location>
        <begin position="23"/>
        <end position="43"/>
    </location>
</feature>
<feature type="transmembrane region" description="Helical" evidence="1">
    <location>
        <begin position="71"/>
        <end position="91"/>
    </location>
</feature>
<feature type="transmembrane region" description="Helical" evidence="1">
    <location>
        <begin position="107"/>
        <end position="127"/>
    </location>
</feature>
<feature type="transmembrane region" description="Helical" evidence="1">
    <location>
        <begin position="133"/>
        <end position="153"/>
    </location>
</feature>
<feature type="transmembrane region" description="Helical" evidence="1">
    <location>
        <begin position="189"/>
        <end position="209"/>
    </location>
</feature>
<feature type="transmembrane region" description="Helical" evidence="1">
    <location>
        <begin position="217"/>
        <end position="237"/>
    </location>
</feature>
<feature type="transmembrane region" description="Helical" evidence="1">
    <location>
        <begin position="247"/>
        <end position="267"/>
    </location>
</feature>
<feature type="binding site" evidence="1">
    <location>
        <position position="154"/>
    </location>
    <ligand>
        <name>a 1,2-diacyl-sn-glycero-3-phospho-(1'-sn-glycerol)</name>
        <dbReference type="ChEBI" id="CHEBI:64716"/>
    </ligand>
</feature>
<comment type="function">
    <text evidence="1">Catalyzes the transfer of the diacylglyceryl group from phosphatidylglycerol to the sulfhydryl group of the N-terminal cysteine of a prolipoprotein, the first step in the formation of mature lipoproteins.</text>
</comment>
<comment type="catalytic activity">
    <reaction evidence="1">
        <text>L-cysteinyl-[prolipoprotein] + a 1,2-diacyl-sn-glycero-3-phospho-(1'-sn-glycerol) = an S-1,2-diacyl-sn-glyceryl-L-cysteinyl-[prolipoprotein] + sn-glycerol 1-phosphate + H(+)</text>
        <dbReference type="Rhea" id="RHEA:56712"/>
        <dbReference type="Rhea" id="RHEA-COMP:14679"/>
        <dbReference type="Rhea" id="RHEA-COMP:14680"/>
        <dbReference type="ChEBI" id="CHEBI:15378"/>
        <dbReference type="ChEBI" id="CHEBI:29950"/>
        <dbReference type="ChEBI" id="CHEBI:57685"/>
        <dbReference type="ChEBI" id="CHEBI:64716"/>
        <dbReference type="ChEBI" id="CHEBI:140658"/>
        <dbReference type="EC" id="2.5.1.145"/>
    </reaction>
</comment>
<comment type="pathway">
    <text evidence="1">Protein modification; lipoprotein biosynthesis (diacylglyceryl transfer).</text>
</comment>
<comment type="subcellular location">
    <subcellularLocation>
        <location evidence="1">Cell inner membrane</location>
        <topology evidence="1">Multi-pass membrane protein</topology>
    </subcellularLocation>
</comment>
<comment type="similarity">
    <text evidence="1">Belongs to the Lgt family.</text>
</comment>
<dbReference type="EC" id="2.5.1.145" evidence="1"/>
<dbReference type="EMBL" id="CP000872">
    <property type="protein sequence ID" value="ABX62590.1"/>
    <property type="molecule type" value="Genomic_DNA"/>
</dbReference>
<dbReference type="RefSeq" id="WP_004691562.1">
    <property type="nucleotide sequence ID" value="NC_010103.1"/>
</dbReference>
<dbReference type="SMR" id="A9M6J4"/>
<dbReference type="GeneID" id="55591167"/>
<dbReference type="KEGG" id="bcs:BCAN_A1565"/>
<dbReference type="HOGENOM" id="CLU_013386_1_0_5"/>
<dbReference type="PhylomeDB" id="A9M6J4"/>
<dbReference type="UniPathway" id="UPA00664"/>
<dbReference type="Proteomes" id="UP000001385">
    <property type="component" value="Chromosome I"/>
</dbReference>
<dbReference type="GO" id="GO:0005886">
    <property type="term" value="C:plasma membrane"/>
    <property type="evidence" value="ECO:0007669"/>
    <property type="project" value="UniProtKB-SubCell"/>
</dbReference>
<dbReference type="GO" id="GO:0008961">
    <property type="term" value="F:phosphatidylglycerol-prolipoprotein diacylglyceryl transferase activity"/>
    <property type="evidence" value="ECO:0007669"/>
    <property type="project" value="UniProtKB-UniRule"/>
</dbReference>
<dbReference type="GO" id="GO:0042158">
    <property type="term" value="P:lipoprotein biosynthetic process"/>
    <property type="evidence" value="ECO:0007669"/>
    <property type="project" value="UniProtKB-UniRule"/>
</dbReference>
<dbReference type="HAMAP" id="MF_01147">
    <property type="entry name" value="Lgt"/>
    <property type="match status" value="1"/>
</dbReference>
<dbReference type="InterPro" id="IPR001640">
    <property type="entry name" value="Lgt"/>
</dbReference>
<dbReference type="NCBIfam" id="TIGR00544">
    <property type="entry name" value="lgt"/>
    <property type="match status" value="1"/>
</dbReference>
<dbReference type="PANTHER" id="PTHR30589:SF0">
    <property type="entry name" value="PHOSPHATIDYLGLYCEROL--PROLIPOPROTEIN DIACYLGLYCERYL TRANSFERASE"/>
    <property type="match status" value="1"/>
</dbReference>
<dbReference type="PANTHER" id="PTHR30589">
    <property type="entry name" value="PROLIPOPROTEIN DIACYLGLYCERYL TRANSFERASE"/>
    <property type="match status" value="1"/>
</dbReference>
<dbReference type="Pfam" id="PF01790">
    <property type="entry name" value="LGT"/>
    <property type="match status" value="1"/>
</dbReference>
<organism>
    <name type="scientific">Brucella canis (strain ATCC 23365 / NCTC 10854 / RM-666)</name>
    <dbReference type="NCBI Taxonomy" id="483179"/>
    <lineage>
        <taxon>Bacteria</taxon>
        <taxon>Pseudomonadati</taxon>
        <taxon>Pseudomonadota</taxon>
        <taxon>Alphaproteobacteria</taxon>
        <taxon>Hyphomicrobiales</taxon>
        <taxon>Brucellaceae</taxon>
        <taxon>Brucella/Ochrobactrum group</taxon>
        <taxon>Brucella</taxon>
    </lineage>
</organism>